<evidence type="ECO:0000255" key="1">
    <source>
        <dbReference type="HAMAP-Rule" id="MF_01334"/>
    </source>
</evidence>
<evidence type="ECO:0000305" key="2"/>
<name>RL25_RHIEC</name>
<protein>
    <recommendedName>
        <fullName evidence="1">Large ribosomal subunit protein bL25</fullName>
    </recommendedName>
    <alternativeName>
        <fullName evidence="2">50S ribosomal protein L25</fullName>
    </alternativeName>
    <alternativeName>
        <fullName evidence="1">General stress protein CTC</fullName>
    </alternativeName>
</protein>
<dbReference type="EMBL" id="CP000133">
    <property type="protein sequence ID" value="ABC91792.1"/>
    <property type="status" value="ALT_INIT"/>
    <property type="molecule type" value="Genomic_DNA"/>
</dbReference>
<dbReference type="RefSeq" id="WP_011426265.1">
    <property type="nucleotide sequence ID" value="NC_007761.1"/>
</dbReference>
<dbReference type="SMR" id="Q2K5U4"/>
<dbReference type="KEGG" id="ret:RHE_CH03025"/>
<dbReference type="eggNOG" id="COG1825">
    <property type="taxonomic scope" value="Bacteria"/>
</dbReference>
<dbReference type="HOGENOM" id="CLU_075939_0_0_5"/>
<dbReference type="OrthoDB" id="9806411at2"/>
<dbReference type="Proteomes" id="UP000001936">
    <property type="component" value="Chromosome"/>
</dbReference>
<dbReference type="GO" id="GO:0022625">
    <property type="term" value="C:cytosolic large ribosomal subunit"/>
    <property type="evidence" value="ECO:0007669"/>
    <property type="project" value="TreeGrafter"/>
</dbReference>
<dbReference type="GO" id="GO:0008097">
    <property type="term" value="F:5S rRNA binding"/>
    <property type="evidence" value="ECO:0007669"/>
    <property type="project" value="InterPro"/>
</dbReference>
<dbReference type="GO" id="GO:0003735">
    <property type="term" value="F:structural constituent of ribosome"/>
    <property type="evidence" value="ECO:0007669"/>
    <property type="project" value="InterPro"/>
</dbReference>
<dbReference type="GO" id="GO:0006412">
    <property type="term" value="P:translation"/>
    <property type="evidence" value="ECO:0007669"/>
    <property type="project" value="UniProtKB-UniRule"/>
</dbReference>
<dbReference type="CDD" id="cd00495">
    <property type="entry name" value="Ribosomal_L25_TL5_CTC"/>
    <property type="match status" value="1"/>
</dbReference>
<dbReference type="Gene3D" id="2.170.120.20">
    <property type="entry name" value="Ribosomal protein L25, beta domain"/>
    <property type="match status" value="1"/>
</dbReference>
<dbReference type="Gene3D" id="2.40.240.10">
    <property type="entry name" value="Ribosomal Protein L25, Chain P"/>
    <property type="match status" value="1"/>
</dbReference>
<dbReference type="HAMAP" id="MF_01334">
    <property type="entry name" value="Ribosomal_bL25_CTC"/>
    <property type="match status" value="1"/>
</dbReference>
<dbReference type="InterPro" id="IPR020056">
    <property type="entry name" value="Rbsml_bL25/Gln-tRNA_synth_N"/>
</dbReference>
<dbReference type="InterPro" id="IPR011035">
    <property type="entry name" value="Ribosomal_bL25/Gln-tRNA_synth"/>
</dbReference>
<dbReference type="InterPro" id="IPR020057">
    <property type="entry name" value="Ribosomal_bL25_b-dom"/>
</dbReference>
<dbReference type="InterPro" id="IPR037121">
    <property type="entry name" value="Ribosomal_bL25_C"/>
</dbReference>
<dbReference type="InterPro" id="IPR001021">
    <property type="entry name" value="Ribosomal_bL25_long"/>
</dbReference>
<dbReference type="InterPro" id="IPR029751">
    <property type="entry name" value="Ribosomal_L25_dom"/>
</dbReference>
<dbReference type="InterPro" id="IPR020930">
    <property type="entry name" value="Ribosomal_uL5_bac-type"/>
</dbReference>
<dbReference type="NCBIfam" id="TIGR00731">
    <property type="entry name" value="bL25_bact_ctc"/>
    <property type="match status" value="1"/>
</dbReference>
<dbReference type="NCBIfam" id="NF004128">
    <property type="entry name" value="PRK05618.1-2"/>
    <property type="match status" value="1"/>
</dbReference>
<dbReference type="NCBIfam" id="NF004612">
    <property type="entry name" value="PRK05943.1"/>
    <property type="match status" value="1"/>
</dbReference>
<dbReference type="PANTHER" id="PTHR33284">
    <property type="entry name" value="RIBOSOMAL PROTEIN L25/GLN-TRNA SYNTHETASE, ANTI-CODON-BINDING DOMAIN-CONTAINING PROTEIN"/>
    <property type="match status" value="1"/>
</dbReference>
<dbReference type="PANTHER" id="PTHR33284:SF1">
    <property type="entry name" value="RIBOSOMAL PROTEIN L25_GLN-TRNA SYNTHETASE, ANTI-CODON-BINDING DOMAIN-CONTAINING PROTEIN"/>
    <property type="match status" value="1"/>
</dbReference>
<dbReference type="Pfam" id="PF01386">
    <property type="entry name" value="Ribosomal_L25p"/>
    <property type="match status" value="1"/>
</dbReference>
<dbReference type="Pfam" id="PF14693">
    <property type="entry name" value="Ribosomal_TL5_C"/>
    <property type="match status" value="1"/>
</dbReference>
<dbReference type="SUPFAM" id="SSF50715">
    <property type="entry name" value="Ribosomal protein L25-like"/>
    <property type="match status" value="1"/>
</dbReference>
<proteinExistence type="inferred from homology"/>
<gene>
    <name evidence="1" type="primary">rplY</name>
    <name evidence="1" type="synonym">ctc</name>
    <name type="ordered locus">RHE_CH03025</name>
</gene>
<accession>Q2K5U4</accession>
<sequence length="204" mass="22071">MSQETYELKAEARERVGKGSARELRRNGLIPAVIYGDKQAPIAIAINTNEVTKRIHAGGFMTTVATIEVDGKKHKVLPKDYQLDPVRDFTLHVDFLRVSGNTQVTVEIPVHFINEAKSPGLKVGGVLNIVRHEVEVHCPADAIPEFFNIDLSGKKIGDSIHISEVTLPKSVTPVIDRDFTIATIVAPAGGVDESAAEAEGEAEA</sequence>
<feature type="chain" id="PRO_0000244233" description="Large ribosomal subunit protein bL25">
    <location>
        <begin position="1"/>
        <end position="204"/>
    </location>
</feature>
<reference key="1">
    <citation type="journal article" date="2006" name="Proc. Natl. Acad. Sci. U.S.A.">
        <title>The partitioned Rhizobium etli genome: genetic and metabolic redundancy in seven interacting replicons.</title>
        <authorList>
            <person name="Gonzalez V."/>
            <person name="Santamaria R.I."/>
            <person name="Bustos P."/>
            <person name="Hernandez-Gonzalez I."/>
            <person name="Medrano-Soto A."/>
            <person name="Moreno-Hagelsieb G."/>
            <person name="Janga S.C."/>
            <person name="Ramirez M.A."/>
            <person name="Jimenez-Jacinto V."/>
            <person name="Collado-Vides J."/>
            <person name="Davila G."/>
        </authorList>
    </citation>
    <scope>NUCLEOTIDE SEQUENCE [LARGE SCALE GENOMIC DNA]</scope>
    <source>
        <strain>ATCC 51251 / DSM 11541 / JCM 21823 / NBRC 15573 / CFN 42</strain>
    </source>
</reference>
<comment type="function">
    <text evidence="1">This is one of the proteins that binds to the 5S RNA in the ribosome where it forms part of the central protuberance.</text>
</comment>
<comment type="subunit">
    <text evidence="1">Part of the 50S ribosomal subunit; part of the 5S rRNA/L5/L18/L25 subcomplex. Contacts the 5S rRNA. Binds to the 5S rRNA independently of L5 and L18.</text>
</comment>
<comment type="similarity">
    <text evidence="1">Belongs to the bacterial ribosomal protein bL25 family. CTC subfamily.</text>
</comment>
<comment type="sequence caution" evidence="2">
    <conflict type="erroneous initiation">
        <sequence resource="EMBL-CDS" id="ABC91792"/>
    </conflict>
</comment>
<keyword id="KW-1185">Reference proteome</keyword>
<keyword id="KW-0687">Ribonucleoprotein</keyword>
<keyword id="KW-0689">Ribosomal protein</keyword>
<keyword id="KW-0694">RNA-binding</keyword>
<keyword id="KW-0699">rRNA-binding</keyword>
<organism>
    <name type="scientific">Rhizobium etli (strain ATCC 51251 / DSM 11541 / JCM 21823 / NBRC 15573 / CFN 42)</name>
    <dbReference type="NCBI Taxonomy" id="347834"/>
    <lineage>
        <taxon>Bacteria</taxon>
        <taxon>Pseudomonadati</taxon>
        <taxon>Pseudomonadota</taxon>
        <taxon>Alphaproteobacteria</taxon>
        <taxon>Hyphomicrobiales</taxon>
        <taxon>Rhizobiaceae</taxon>
        <taxon>Rhizobium/Agrobacterium group</taxon>
        <taxon>Rhizobium</taxon>
    </lineage>
</organism>